<reference key="1">
    <citation type="journal article" date="2010" name="Genome Biol.">
        <title>Structure and dynamics of the pan-genome of Streptococcus pneumoniae and closely related species.</title>
        <authorList>
            <person name="Donati C."/>
            <person name="Hiller N.L."/>
            <person name="Tettelin H."/>
            <person name="Muzzi A."/>
            <person name="Croucher N.J."/>
            <person name="Angiuoli S.V."/>
            <person name="Oggioni M."/>
            <person name="Dunning Hotopp J.C."/>
            <person name="Hu F.Z."/>
            <person name="Riley D.R."/>
            <person name="Covacci A."/>
            <person name="Mitchell T.J."/>
            <person name="Bentley S.D."/>
            <person name="Kilian M."/>
            <person name="Ehrlich G.D."/>
            <person name="Rappuoli R."/>
            <person name="Moxon E.R."/>
            <person name="Masignani V."/>
        </authorList>
    </citation>
    <scope>NUCLEOTIDE SEQUENCE [LARGE SCALE GENOMIC DNA]</scope>
    <source>
        <strain>P1031</strain>
    </source>
</reference>
<name>TGT_STRZP</name>
<proteinExistence type="inferred from homology"/>
<feature type="chain" id="PRO_1000198029" description="Queuine tRNA-ribosyltransferase">
    <location>
        <begin position="1"/>
        <end position="380"/>
    </location>
</feature>
<feature type="region of interest" description="RNA binding" evidence="1">
    <location>
        <begin position="251"/>
        <end position="257"/>
    </location>
</feature>
<feature type="region of interest" description="RNA binding; important for wobble base 34 recognition" evidence="1">
    <location>
        <begin position="275"/>
        <end position="279"/>
    </location>
</feature>
<feature type="active site" description="Proton acceptor" evidence="1">
    <location>
        <position position="96"/>
    </location>
</feature>
<feature type="active site" description="Nucleophile" evidence="1">
    <location>
        <position position="270"/>
    </location>
</feature>
<feature type="binding site" evidence="1">
    <location>
        <begin position="96"/>
        <end position="100"/>
    </location>
    <ligand>
        <name>substrate</name>
    </ligand>
</feature>
<feature type="binding site" evidence="1">
    <location>
        <position position="150"/>
    </location>
    <ligand>
        <name>substrate</name>
    </ligand>
</feature>
<feature type="binding site" evidence="1">
    <location>
        <position position="193"/>
    </location>
    <ligand>
        <name>substrate</name>
    </ligand>
</feature>
<feature type="binding site" evidence="1">
    <location>
        <position position="220"/>
    </location>
    <ligand>
        <name>substrate</name>
    </ligand>
</feature>
<feature type="binding site" evidence="1">
    <location>
        <position position="308"/>
    </location>
    <ligand>
        <name>Zn(2+)</name>
        <dbReference type="ChEBI" id="CHEBI:29105"/>
    </ligand>
</feature>
<feature type="binding site" evidence="1">
    <location>
        <position position="310"/>
    </location>
    <ligand>
        <name>Zn(2+)</name>
        <dbReference type="ChEBI" id="CHEBI:29105"/>
    </ligand>
</feature>
<feature type="binding site" evidence="1">
    <location>
        <position position="313"/>
    </location>
    <ligand>
        <name>Zn(2+)</name>
        <dbReference type="ChEBI" id="CHEBI:29105"/>
    </ligand>
</feature>
<feature type="binding site" evidence="1">
    <location>
        <position position="339"/>
    </location>
    <ligand>
        <name>Zn(2+)</name>
        <dbReference type="ChEBI" id="CHEBI:29105"/>
    </ligand>
</feature>
<organism>
    <name type="scientific">Streptococcus pneumoniae (strain P1031)</name>
    <dbReference type="NCBI Taxonomy" id="488223"/>
    <lineage>
        <taxon>Bacteria</taxon>
        <taxon>Bacillati</taxon>
        <taxon>Bacillota</taxon>
        <taxon>Bacilli</taxon>
        <taxon>Lactobacillales</taxon>
        <taxon>Streptococcaceae</taxon>
        <taxon>Streptococcus</taxon>
    </lineage>
</organism>
<sequence length="380" mass="43086">MSDSPIKYRLIKKEKHTGARLGEIITPHGTFPTPMFMPVGTQATVKTQSPEELKEMGSGIILSNTYHLWLRPGDELIARAGGLHKFMNWDQPILTDSGGFQVYSLADSRNITEEGVTFKNHLNGSKMLLSPEKAISIQNNLGSDIMMSFDECPQFYQPYDYVKKSIERTSRWAERGLKAHRRPHDQGLFGIVQGAGFEDLRRQSAHDLVSMDFSGYSIGGLAVGETHEEMNAVLDFTTQLLPENKPRYLMGVGAPDSLIDGVIRGVDMFDCVLPTRIARNGTCMTSQGRLVVKNAQFAEDFTPLDPECDCYTCNNYTRAYLRHLLKADETFGIRLTSYHNLYFLLNLMKQVRQAIMDDNLLEFRKYFVEKYGYNKSGRNF</sequence>
<accession>C1CN05</accession>
<gene>
    <name evidence="1" type="primary">tgt</name>
    <name type="ordered locus">SPP_2096</name>
</gene>
<keyword id="KW-0328">Glycosyltransferase</keyword>
<keyword id="KW-0479">Metal-binding</keyword>
<keyword id="KW-0671">Queuosine biosynthesis</keyword>
<keyword id="KW-0808">Transferase</keyword>
<keyword id="KW-0819">tRNA processing</keyword>
<keyword id="KW-0862">Zinc</keyword>
<evidence type="ECO:0000255" key="1">
    <source>
        <dbReference type="HAMAP-Rule" id="MF_00168"/>
    </source>
</evidence>
<dbReference type="EC" id="2.4.2.29" evidence="1"/>
<dbReference type="EMBL" id="CP000920">
    <property type="protein sequence ID" value="ACO21236.1"/>
    <property type="molecule type" value="Genomic_DNA"/>
</dbReference>
<dbReference type="RefSeq" id="WP_001285255.1">
    <property type="nucleotide sequence ID" value="NC_012467.1"/>
</dbReference>
<dbReference type="SMR" id="C1CN05"/>
<dbReference type="GeneID" id="45652721"/>
<dbReference type="KEGG" id="spp:SPP_2096"/>
<dbReference type="HOGENOM" id="CLU_022060_0_1_9"/>
<dbReference type="UniPathway" id="UPA00392"/>
<dbReference type="GO" id="GO:0005829">
    <property type="term" value="C:cytosol"/>
    <property type="evidence" value="ECO:0007669"/>
    <property type="project" value="TreeGrafter"/>
</dbReference>
<dbReference type="GO" id="GO:0046872">
    <property type="term" value="F:metal ion binding"/>
    <property type="evidence" value="ECO:0007669"/>
    <property type="project" value="UniProtKB-KW"/>
</dbReference>
<dbReference type="GO" id="GO:0008479">
    <property type="term" value="F:tRNA-guanosine(34) queuine transglycosylase activity"/>
    <property type="evidence" value="ECO:0007669"/>
    <property type="project" value="UniProtKB-UniRule"/>
</dbReference>
<dbReference type="GO" id="GO:0008616">
    <property type="term" value="P:queuosine biosynthetic process"/>
    <property type="evidence" value="ECO:0007669"/>
    <property type="project" value="UniProtKB-UniRule"/>
</dbReference>
<dbReference type="GO" id="GO:0002099">
    <property type="term" value="P:tRNA wobble guanine modification"/>
    <property type="evidence" value="ECO:0007669"/>
    <property type="project" value="TreeGrafter"/>
</dbReference>
<dbReference type="GO" id="GO:0101030">
    <property type="term" value="P:tRNA-guanine transglycosylation"/>
    <property type="evidence" value="ECO:0007669"/>
    <property type="project" value="InterPro"/>
</dbReference>
<dbReference type="FunFam" id="3.20.20.105:FF:000001">
    <property type="entry name" value="Queuine tRNA-ribosyltransferase"/>
    <property type="match status" value="1"/>
</dbReference>
<dbReference type="Gene3D" id="3.20.20.105">
    <property type="entry name" value="Queuine tRNA-ribosyltransferase-like"/>
    <property type="match status" value="1"/>
</dbReference>
<dbReference type="HAMAP" id="MF_00168">
    <property type="entry name" value="Q_tRNA_Tgt"/>
    <property type="match status" value="1"/>
</dbReference>
<dbReference type="InterPro" id="IPR050076">
    <property type="entry name" value="ArchSynthase1/Queuine_TRR"/>
</dbReference>
<dbReference type="InterPro" id="IPR004803">
    <property type="entry name" value="TGT"/>
</dbReference>
<dbReference type="InterPro" id="IPR036511">
    <property type="entry name" value="TGT-like_sf"/>
</dbReference>
<dbReference type="InterPro" id="IPR002616">
    <property type="entry name" value="tRNA_ribo_trans-like"/>
</dbReference>
<dbReference type="NCBIfam" id="TIGR00430">
    <property type="entry name" value="Q_tRNA_tgt"/>
    <property type="match status" value="1"/>
</dbReference>
<dbReference type="NCBIfam" id="TIGR00449">
    <property type="entry name" value="tgt_general"/>
    <property type="match status" value="1"/>
</dbReference>
<dbReference type="PANTHER" id="PTHR46499">
    <property type="entry name" value="QUEUINE TRNA-RIBOSYLTRANSFERASE"/>
    <property type="match status" value="1"/>
</dbReference>
<dbReference type="PANTHER" id="PTHR46499:SF1">
    <property type="entry name" value="QUEUINE TRNA-RIBOSYLTRANSFERASE"/>
    <property type="match status" value="1"/>
</dbReference>
<dbReference type="Pfam" id="PF01702">
    <property type="entry name" value="TGT"/>
    <property type="match status" value="1"/>
</dbReference>
<dbReference type="SUPFAM" id="SSF51713">
    <property type="entry name" value="tRNA-guanine transglycosylase"/>
    <property type="match status" value="1"/>
</dbReference>
<protein>
    <recommendedName>
        <fullName evidence="1">Queuine tRNA-ribosyltransferase</fullName>
        <ecNumber evidence="1">2.4.2.29</ecNumber>
    </recommendedName>
    <alternativeName>
        <fullName evidence="1">Guanine insertion enzyme</fullName>
    </alternativeName>
    <alternativeName>
        <fullName evidence="1">tRNA-guanine transglycosylase</fullName>
    </alternativeName>
</protein>
<comment type="function">
    <text evidence="1">Catalyzes the base-exchange of a guanine (G) residue with the queuine precursor 7-aminomethyl-7-deazaguanine (PreQ1) at position 34 (anticodon wobble position) in tRNAs with GU(N) anticodons (tRNA-Asp, -Asn, -His and -Tyr). Catalysis occurs through a double-displacement mechanism. The nucleophile active site attacks the C1' of nucleotide 34 to detach the guanine base from the RNA, forming a covalent enzyme-RNA intermediate. The proton acceptor active site deprotonates the incoming PreQ1, allowing a nucleophilic attack on the C1' of the ribose to form the product. After dissociation, two additional enzymatic reactions on the tRNA convert PreQ1 to queuine (Q), resulting in the hypermodified nucleoside queuosine (7-(((4,5-cis-dihydroxy-2-cyclopenten-1-yl)amino)methyl)-7-deazaguanosine).</text>
</comment>
<comment type="catalytic activity">
    <reaction evidence="1">
        <text>7-aminomethyl-7-carbaguanine + guanosine(34) in tRNA = 7-aminomethyl-7-carbaguanosine(34) in tRNA + guanine</text>
        <dbReference type="Rhea" id="RHEA:24104"/>
        <dbReference type="Rhea" id="RHEA-COMP:10341"/>
        <dbReference type="Rhea" id="RHEA-COMP:10342"/>
        <dbReference type="ChEBI" id="CHEBI:16235"/>
        <dbReference type="ChEBI" id="CHEBI:58703"/>
        <dbReference type="ChEBI" id="CHEBI:74269"/>
        <dbReference type="ChEBI" id="CHEBI:82833"/>
        <dbReference type="EC" id="2.4.2.29"/>
    </reaction>
</comment>
<comment type="cofactor">
    <cofactor evidence="1">
        <name>Zn(2+)</name>
        <dbReference type="ChEBI" id="CHEBI:29105"/>
    </cofactor>
    <text evidence="1">Binds 1 zinc ion per subunit.</text>
</comment>
<comment type="pathway">
    <text evidence="1">tRNA modification; tRNA-queuosine biosynthesis.</text>
</comment>
<comment type="subunit">
    <text evidence="1">Homodimer. Within each dimer, one monomer is responsible for RNA recognition and catalysis, while the other monomer binds to the replacement base PreQ1.</text>
</comment>
<comment type="similarity">
    <text evidence="1">Belongs to the queuine tRNA-ribosyltransferase family.</text>
</comment>